<keyword id="KW-0963">Cytoplasm</keyword>
<keyword id="KW-0539">Nucleus</keyword>
<keyword id="KW-1185">Reference proteome</keyword>
<name>LO917_ORYSI</name>
<dbReference type="EMBL" id="CM000128">
    <property type="protein sequence ID" value="EAY91160.1"/>
    <property type="molecule type" value="Genomic_DNA"/>
</dbReference>
<dbReference type="SMR" id="A2XK00"/>
<dbReference type="STRING" id="39946.A2XK00"/>
<dbReference type="EnsemblPlants" id="BGIOSGA010167-TA">
    <property type="protein sequence ID" value="BGIOSGA010167-PA"/>
    <property type="gene ID" value="BGIOSGA010167"/>
</dbReference>
<dbReference type="EnsemblPlants" id="OsGoSa_03g0027400.01">
    <property type="protein sequence ID" value="OsGoSa_03g0027400.01"/>
    <property type="gene ID" value="OsGoSa_03g0027400"/>
</dbReference>
<dbReference type="EnsemblPlants" id="OsIR64_03g0027010.01">
    <property type="protein sequence ID" value="OsIR64_03g0027010.01"/>
    <property type="gene ID" value="OsIR64_03g0027010"/>
</dbReference>
<dbReference type="EnsemblPlants" id="OsKYG_03g0027310.01">
    <property type="protein sequence ID" value="OsKYG_03g0027310.01"/>
    <property type="gene ID" value="OsKYG_03g0027310"/>
</dbReference>
<dbReference type="EnsemblPlants" id="OsLaMu_03g0027080.01">
    <property type="protein sequence ID" value="OsLaMu_03g0027080.01"/>
    <property type="gene ID" value="OsLaMu_03g0027080"/>
</dbReference>
<dbReference type="EnsemblPlants" id="OsLima_03g0027270.01">
    <property type="protein sequence ID" value="OsLima_03g0027270.01"/>
    <property type="gene ID" value="OsLima_03g0027270"/>
</dbReference>
<dbReference type="EnsemblPlants" id="OsLiXu_Ung0012920.01">
    <property type="protein sequence ID" value="OsLiXu_Ung0012920.01"/>
    <property type="gene ID" value="OsLiXu_Ung0012920"/>
</dbReference>
<dbReference type="EnsemblPlants" id="OsMH63_03G027310_01">
    <property type="protein sequence ID" value="OsMH63_03G027310_01"/>
    <property type="gene ID" value="OsMH63_03G027310"/>
</dbReference>
<dbReference type="EnsemblPlants" id="OsPr106_03g0027250.01">
    <property type="protein sequence ID" value="OsPr106_03g0027250.01"/>
    <property type="gene ID" value="OsPr106_03g0027250"/>
</dbReference>
<dbReference type="EnsemblPlants" id="OsZS97_03G027210_01">
    <property type="protein sequence ID" value="OsZS97_03G027210_01"/>
    <property type="gene ID" value="OsZS97_03G027210"/>
</dbReference>
<dbReference type="Gramene" id="BGIOSGA010167-TA">
    <property type="protein sequence ID" value="BGIOSGA010167-PA"/>
    <property type="gene ID" value="BGIOSGA010167"/>
</dbReference>
<dbReference type="Gramene" id="OsGoSa_03g0027400.01">
    <property type="protein sequence ID" value="OsGoSa_03g0027400.01"/>
    <property type="gene ID" value="OsGoSa_03g0027400"/>
</dbReference>
<dbReference type="Gramene" id="OsIR64_03g0027010.01">
    <property type="protein sequence ID" value="OsIR64_03g0027010.01"/>
    <property type="gene ID" value="OsIR64_03g0027010"/>
</dbReference>
<dbReference type="Gramene" id="OsKYG_03g0027310.01">
    <property type="protein sequence ID" value="OsKYG_03g0027310.01"/>
    <property type="gene ID" value="OsKYG_03g0027310"/>
</dbReference>
<dbReference type="Gramene" id="OsLaMu_03g0027080.01">
    <property type="protein sequence ID" value="OsLaMu_03g0027080.01"/>
    <property type="gene ID" value="OsLaMu_03g0027080"/>
</dbReference>
<dbReference type="Gramene" id="OsLima_03g0027270.01">
    <property type="protein sequence ID" value="OsLima_03g0027270.01"/>
    <property type="gene ID" value="OsLima_03g0027270"/>
</dbReference>
<dbReference type="Gramene" id="OsLiXu_Ung0012920.01">
    <property type="protein sequence ID" value="OsLiXu_Ung0012920.01"/>
    <property type="gene ID" value="OsLiXu_Ung0012920"/>
</dbReference>
<dbReference type="Gramene" id="OsMH63_03G027310_01">
    <property type="protein sequence ID" value="OsMH63_03G027310_01"/>
    <property type="gene ID" value="OsMH63_03G027310"/>
</dbReference>
<dbReference type="Gramene" id="OsPr106_03g0027250.01">
    <property type="protein sequence ID" value="OsPr106_03g0027250.01"/>
    <property type="gene ID" value="OsPr106_03g0027250"/>
</dbReference>
<dbReference type="Gramene" id="OsZS97_03G027210_01">
    <property type="protein sequence ID" value="OsZS97_03G027210_01"/>
    <property type="gene ID" value="OsZS97_03G027210"/>
</dbReference>
<dbReference type="HOGENOM" id="CLU_094353_2_0_1"/>
<dbReference type="OMA" id="NDYSEQC"/>
<dbReference type="OrthoDB" id="10258877at2759"/>
<dbReference type="Proteomes" id="UP000007015">
    <property type="component" value="Chromosome 3"/>
</dbReference>
<dbReference type="GO" id="GO:0099078">
    <property type="term" value="C:BORC complex"/>
    <property type="evidence" value="ECO:0007669"/>
    <property type="project" value="TreeGrafter"/>
</dbReference>
<dbReference type="GO" id="GO:0005737">
    <property type="term" value="C:cytoplasm"/>
    <property type="evidence" value="ECO:0007669"/>
    <property type="project" value="UniProtKB-SubCell"/>
</dbReference>
<dbReference type="GO" id="GO:0005634">
    <property type="term" value="C:nucleus"/>
    <property type="evidence" value="ECO:0007669"/>
    <property type="project" value="UniProtKB-SubCell"/>
</dbReference>
<dbReference type="GO" id="GO:0042803">
    <property type="term" value="F:protein homodimerization activity"/>
    <property type="evidence" value="ECO:0007669"/>
    <property type="project" value="EnsemblPlants"/>
</dbReference>
<dbReference type="GO" id="GO:0032418">
    <property type="term" value="P:lysosome localization"/>
    <property type="evidence" value="ECO:0007669"/>
    <property type="project" value="TreeGrafter"/>
</dbReference>
<dbReference type="InterPro" id="IPR039843">
    <property type="entry name" value="KXD1-like"/>
</dbReference>
<dbReference type="InterPro" id="IPR019371">
    <property type="entry name" value="KxDL_dom"/>
</dbReference>
<dbReference type="PANTHER" id="PTHR13511">
    <property type="entry name" value="KXDL MOTIF-CONTAINING PROTEIN 1"/>
    <property type="match status" value="1"/>
</dbReference>
<dbReference type="PANTHER" id="PTHR13511:SF0">
    <property type="entry name" value="KXDL MOTIF-CONTAINING PROTEIN 1"/>
    <property type="match status" value="1"/>
</dbReference>
<dbReference type="Pfam" id="PF10241">
    <property type="entry name" value="KxDL"/>
    <property type="match status" value="1"/>
</dbReference>
<protein>
    <recommendedName>
        <fullName evidence="1">KxDL motif-containing protein LO9-177</fullName>
    </recommendedName>
</protein>
<sequence length="123" mass="13659">MEKSPPETAAAAAEVAARFRSLVDTGDIGAIRQTQHLILGRLQDSNAVLTHFNEYSEQCFAEVSNDFASKTRLLKSMKDDLDHIFLKLRSMKSRLAATYPDAFPDGAMAKTMDQRPDLESPLD</sequence>
<feature type="chain" id="PRO_0000456868" description="KxDL motif-containing protein LO9-177">
    <location>
        <begin position="1"/>
        <end position="123"/>
    </location>
</feature>
<feature type="short sequence motif" description="KxDL">
    <location>
        <begin position="78"/>
        <end position="81"/>
    </location>
</feature>
<accession>A2XK00</accession>
<gene>
    <name evidence="1" type="primary">LO9-177</name>
    <name evidence="3" type="ORF">OsI_12768</name>
</gene>
<proteinExistence type="inferred from homology"/>
<evidence type="ECO:0000250" key="1">
    <source>
        <dbReference type="UniProtKB" id="Q6ASS9"/>
    </source>
</evidence>
<evidence type="ECO:0000305" key="2"/>
<evidence type="ECO:0000312" key="3">
    <source>
        <dbReference type="EMBL" id="EAY91160.1"/>
    </source>
</evidence>
<organism>
    <name type="scientific">Oryza sativa subsp. indica</name>
    <name type="common">Rice</name>
    <dbReference type="NCBI Taxonomy" id="39946"/>
    <lineage>
        <taxon>Eukaryota</taxon>
        <taxon>Viridiplantae</taxon>
        <taxon>Streptophyta</taxon>
        <taxon>Embryophyta</taxon>
        <taxon>Tracheophyta</taxon>
        <taxon>Spermatophyta</taxon>
        <taxon>Magnoliopsida</taxon>
        <taxon>Liliopsida</taxon>
        <taxon>Poales</taxon>
        <taxon>Poaceae</taxon>
        <taxon>BOP clade</taxon>
        <taxon>Oryzoideae</taxon>
        <taxon>Oryzeae</taxon>
        <taxon>Oryzinae</taxon>
        <taxon>Oryza</taxon>
        <taxon>Oryza sativa</taxon>
    </lineage>
</organism>
<reference key="1">
    <citation type="journal article" date="2005" name="PLoS Biol.">
        <title>The genomes of Oryza sativa: a history of duplications.</title>
        <authorList>
            <person name="Yu J."/>
            <person name="Wang J."/>
            <person name="Lin W."/>
            <person name="Li S."/>
            <person name="Li H."/>
            <person name="Zhou J."/>
            <person name="Ni P."/>
            <person name="Dong W."/>
            <person name="Hu S."/>
            <person name="Zeng C."/>
            <person name="Zhang J."/>
            <person name="Zhang Y."/>
            <person name="Li R."/>
            <person name="Xu Z."/>
            <person name="Li S."/>
            <person name="Li X."/>
            <person name="Zheng H."/>
            <person name="Cong L."/>
            <person name="Lin L."/>
            <person name="Yin J."/>
            <person name="Geng J."/>
            <person name="Li G."/>
            <person name="Shi J."/>
            <person name="Liu J."/>
            <person name="Lv H."/>
            <person name="Li J."/>
            <person name="Wang J."/>
            <person name="Deng Y."/>
            <person name="Ran L."/>
            <person name="Shi X."/>
            <person name="Wang X."/>
            <person name="Wu Q."/>
            <person name="Li C."/>
            <person name="Ren X."/>
            <person name="Wang J."/>
            <person name="Wang X."/>
            <person name="Li D."/>
            <person name="Liu D."/>
            <person name="Zhang X."/>
            <person name="Ji Z."/>
            <person name="Zhao W."/>
            <person name="Sun Y."/>
            <person name="Zhang Z."/>
            <person name="Bao J."/>
            <person name="Han Y."/>
            <person name="Dong L."/>
            <person name="Ji J."/>
            <person name="Chen P."/>
            <person name="Wu S."/>
            <person name="Liu J."/>
            <person name="Xiao Y."/>
            <person name="Bu D."/>
            <person name="Tan J."/>
            <person name="Yang L."/>
            <person name="Ye C."/>
            <person name="Zhang J."/>
            <person name="Xu J."/>
            <person name="Zhou Y."/>
            <person name="Yu Y."/>
            <person name="Zhang B."/>
            <person name="Zhuang S."/>
            <person name="Wei H."/>
            <person name="Liu B."/>
            <person name="Lei M."/>
            <person name="Yu H."/>
            <person name="Li Y."/>
            <person name="Xu H."/>
            <person name="Wei S."/>
            <person name="He X."/>
            <person name="Fang L."/>
            <person name="Zhang Z."/>
            <person name="Zhang Y."/>
            <person name="Huang X."/>
            <person name="Su Z."/>
            <person name="Tong W."/>
            <person name="Li J."/>
            <person name="Tong Z."/>
            <person name="Li S."/>
            <person name="Ye J."/>
            <person name="Wang L."/>
            <person name="Fang L."/>
            <person name="Lei T."/>
            <person name="Chen C.-S."/>
            <person name="Chen H.-C."/>
            <person name="Xu Z."/>
            <person name="Li H."/>
            <person name="Huang H."/>
            <person name="Zhang F."/>
            <person name="Xu H."/>
            <person name="Li N."/>
            <person name="Zhao C."/>
            <person name="Li S."/>
            <person name="Dong L."/>
            <person name="Huang Y."/>
            <person name="Li L."/>
            <person name="Xi Y."/>
            <person name="Qi Q."/>
            <person name="Li W."/>
            <person name="Zhang B."/>
            <person name="Hu W."/>
            <person name="Zhang Y."/>
            <person name="Tian X."/>
            <person name="Jiao Y."/>
            <person name="Liang X."/>
            <person name="Jin J."/>
            <person name="Gao L."/>
            <person name="Zheng W."/>
            <person name="Hao B."/>
            <person name="Liu S.-M."/>
            <person name="Wang W."/>
            <person name="Yuan L."/>
            <person name="Cao M."/>
            <person name="McDermott J."/>
            <person name="Samudrala R."/>
            <person name="Wang J."/>
            <person name="Wong G.K.-S."/>
            <person name="Yang H."/>
        </authorList>
    </citation>
    <scope>NUCLEOTIDE SEQUENCE [LARGE SCALE GENOMIC DNA]</scope>
    <source>
        <strain>cv. 93-11</strain>
    </source>
</reference>
<comment type="function">
    <text evidence="1">Contributes, together with ILI5/BUL1 and BC1, to the promotion of leaf inclination and grain size by modulating cell elongation.</text>
</comment>
<comment type="subunit">
    <text evidence="1">Homodimer (By similarity). Component of a nuclear cell elongation controlling complex made of ILI5/BUL1, LO9-177 and BC1 (By similarity). Binds directly to ILI5/BUL1, ILI4/BU1, BUL2 and BUL3 (By similarity). Binds to BC1 in the nucleus (By similarity). Interacts with BCL1 (By similarity).</text>
</comment>
<comment type="subcellular location">
    <subcellularLocation>
        <location evidence="1">Nucleus</location>
    </subcellularLocation>
    <subcellularLocation>
        <location evidence="1">Cytoplasm</location>
    </subcellularLocation>
</comment>
<comment type="similarity">
    <text evidence="2">Belongs to the KXD1 family.</text>
</comment>